<evidence type="ECO:0000250" key="1"/>
<evidence type="ECO:0000250" key="2">
    <source>
        <dbReference type="UniProtKB" id="P19388"/>
    </source>
</evidence>
<evidence type="ECO:0000250" key="3">
    <source>
        <dbReference type="UniProtKB" id="P20434"/>
    </source>
</evidence>
<evidence type="ECO:0000305" key="4"/>
<evidence type="ECO:0000312" key="5">
    <source>
        <dbReference type="RGD" id="1589817"/>
    </source>
</evidence>
<accession>B0BNE2</accession>
<dbReference type="EMBL" id="BC158787">
    <property type="protein sequence ID" value="AAI58788.1"/>
    <property type="molecule type" value="mRNA"/>
</dbReference>
<dbReference type="RefSeq" id="NP_001103084.1">
    <property type="nucleotide sequence ID" value="NM_001109614.1"/>
</dbReference>
<dbReference type="RefSeq" id="XP_038935858.1">
    <property type="nucleotide sequence ID" value="XM_039079930.2"/>
</dbReference>
<dbReference type="SMR" id="B0BNE2"/>
<dbReference type="BioGRID" id="605776">
    <property type="interactions" value="1"/>
</dbReference>
<dbReference type="FunCoup" id="B0BNE2">
    <property type="interactions" value="3521"/>
</dbReference>
<dbReference type="STRING" id="10116.ENSRNOP00000018169"/>
<dbReference type="PhosphoSitePlus" id="B0BNE2"/>
<dbReference type="jPOST" id="B0BNE2"/>
<dbReference type="PaxDb" id="10116-ENSRNOP00000018169"/>
<dbReference type="PeptideAtlas" id="B0BNE2"/>
<dbReference type="Ensembl" id="ENSRNOT00000093413.2">
    <property type="protein sequence ID" value="ENSRNOP00000076239.1"/>
    <property type="gene ID" value="ENSRNOG00000013545.8"/>
</dbReference>
<dbReference type="GeneID" id="690966"/>
<dbReference type="KEGG" id="rno:690966"/>
<dbReference type="UCSC" id="RGD:1589817">
    <property type="organism name" value="rat"/>
</dbReference>
<dbReference type="AGR" id="RGD:1589817"/>
<dbReference type="CTD" id="5434"/>
<dbReference type="RGD" id="1589817">
    <property type="gene designation" value="Polr2e"/>
</dbReference>
<dbReference type="eggNOG" id="KOG3218">
    <property type="taxonomic scope" value="Eukaryota"/>
</dbReference>
<dbReference type="GeneTree" id="ENSGT00390000013841"/>
<dbReference type="HOGENOM" id="CLU_058320_0_1_1"/>
<dbReference type="InParanoid" id="B0BNE2"/>
<dbReference type="OrthoDB" id="248779at2759"/>
<dbReference type="PhylomeDB" id="B0BNE2"/>
<dbReference type="TreeFam" id="TF103040"/>
<dbReference type="Reactome" id="R-RNO-112382">
    <property type="pathway name" value="Formation of RNA Pol II elongation complex"/>
</dbReference>
<dbReference type="Reactome" id="R-RNO-113418">
    <property type="pathway name" value="Formation of the Early Elongation Complex"/>
</dbReference>
<dbReference type="Reactome" id="R-RNO-5250924">
    <property type="pathway name" value="B-WICH complex positively regulates rRNA expression"/>
</dbReference>
<dbReference type="Reactome" id="R-RNO-5578749">
    <property type="pathway name" value="Transcriptional regulation by small RNAs"/>
</dbReference>
<dbReference type="Reactome" id="R-RNO-674695">
    <property type="pathway name" value="RNA Polymerase II Pre-transcription Events"/>
</dbReference>
<dbReference type="Reactome" id="R-RNO-6781823">
    <property type="pathway name" value="Formation of TC-NER Pre-Incision Complex"/>
</dbReference>
<dbReference type="Reactome" id="R-RNO-6782135">
    <property type="pathway name" value="Dual incision in TC-NER"/>
</dbReference>
<dbReference type="Reactome" id="R-RNO-6782210">
    <property type="pathway name" value="Gap-filling DNA repair synthesis and ligation in TC-NER"/>
</dbReference>
<dbReference type="Reactome" id="R-RNO-6796648">
    <property type="pathway name" value="TP53 Regulates Transcription of DNA Repair Genes"/>
</dbReference>
<dbReference type="Reactome" id="R-RNO-6803529">
    <property type="pathway name" value="FGFR2 alternative splicing"/>
</dbReference>
<dbReference type="Reactome" id="R-RNO-6807505">
    <property type="pathway name" value="RNA polymerase II transcribes snRNA genes"/>
</dbReference>
<dbReference type="Reactome" id="R-RNO-72086">
    <property type="pathway name" value="mRNA Capping"/>
</dbReference>
<dbReference type="Reactome" id="R-RNO-72163">
    <property type="pathway name" value="mRNA Splicing - Major Pathway"/>
</dbReference>
<dbReference type="Reactome" id="R-RNO-72165">
    <property type="pathway name" value="mRNA Splicing - Minor Pathway"/>
</dbReference>
<dbReference type="Reactome" id="R-RNO-72203">
    <property type="pathway name" value="Processing of Capped Intron-Containing Pre-mRNA"/>
</dbReference>
<dbReference type="Reactome" id="R-RNO-73762">
    <property type="pathway name" value="RNA Polymerase I Transcription Initiation"/>
</dbReference>
<dbReference type="Reactome" id="R-RNO-73772">
    <property type="pathway name" value="RNA Polymerase I Promoter Escape"/>
</dbReference>
<dbReference type="Reactome" id="R-RNO-73776">
    <property type="pathway name" value="RNA Polymerase II Promoter Escape"/>
</dbReference>
<dbReference type="Reactome" id="R-RNO-73779">
    <property type="pathway name" value="RNA Polymerase II Transcription Pre-Initiation And Promoter Opening"/>
</dbReference>
<dbReference type="Reactome" id="R-RNO-73863">
    <property type="pathway name" value="RNA Polymerase I Transcription Termination"/>
</dbReference>
<dbReference type="Reactome" id="R-RNO-75953">
    <property type="pathway name" value="RNA Polymerase II Transcription Initiation"/>
</dbReference>
<dbReference type="Reactome" id="R-RNO-75955">
    <property type="pathway name" value="RNA Polymerase II Transcription Elongation"/>
</dbReference>
<dbReference type="Reactome" id="R-RNO-76042">
    <property type="pathway name" value="RNA Polymerase II Transcription Initiation And Promoter Clearance"/>
</dbReference>
<dbReference type="Reactome" id="R-RNO-76061">
    <property type="pathway name" value="RNA Polymerase III Transcription Initiation From Type 1 Promoter"/>
</dbReference>
<dbReference type="Reactome" id="R-RNO-76066">
    <property type="pathway name" value="RNA Polymerase III Transcription Initiation From Type 2 Promoter"/>
</dbReference>
<dbReference type="Reactome" id="R-RNO-76071">
    <property type="pathway name" value="RNA Polymerase III Transcription Initiation From Type 3 Promoter"/>
</dbReference>
<dbReference type="Reactome" id="R-RNO-77075">
    <property type="pathway name" value="RNA Pol II CTD phosphorylation and interaction with CE"/>
</dbReference>
<dbReference type="Reactome" id="R-RNO-9018519">
    <property type="pathway name" value="Estrogen-dependent gene expression"/>
</dbReference>
<dbReference type="PRO" id="PR:B0BNE2"/>
<dbReference type="Proteomes" id="UP000002494">
    <property type="component" value="Chromosome 7"/>
</dbReference>
<dbReference type="Bgee" id="ENSRNOG00000013545">
    <property type="expression patterns" value="Expressed in pancreas and 20 other cell types or tissues"/>
</dbReference>
<dbReference type="ExpressionAtlas" id="B0BNE2">
    <property type="expression patterns" value="baseline and differential"/>
</dbReference>
<dbReference type="GO" id="GO:0005634">
    <property type="term" value="C:nucleus"/>
    <property type="evidence" value="ECO:0000250"/>
    <property type="project" value="UniProtKB"/>
</dbReference>
<dbReference type="GO" id="GO:0005736">
    <property type="term" value="C:RNA polymerase I complex"/>
    <property type="evidence" value="ECO:0000266"/>
    <property type="project" value="RGD"/>
</dbReference>
<dbReference type="GO" id="GO:0005665">
    <property type="term" value="C:RNA polymerase II, core complex"/>
    <property type="evidence" value="ECO:0000250"/>
    <property type="project" value="UniProtKB"/>
</dbReference>
<dbReference type="GO" id="GO:0005666">
    <property type="term" value="C:RNA polymerase III complex"/>
    <property type="evidence" value="ECO:0000266"/>
    <property type="project" value="RGD"/>
</dbReference>
<dbReference type="GO" id="GO:1990062">
    <property type="term" value="C:RPAP3/R2TP/prefoldin-like complex"/>
    <property type="evidence" value="ECO:0000266"/>
    <property type="project" value="RGD"/>
</dbReference>
<dbReference type="GO" id="GO:0003677">
    <property type="term" value="F:DNA binding"/>
    <property type="evidence" value="ECO:0007669"/>
    <property type="project" value="InterPro"/>
</dbReference>
<dbReference type="GO" id="GO:0003899">
    <property type="term" value="F:DNA-directed RNA polymerase activity"/>
    <property type="evidence" value="ECO:0007669"/>
    <property type="project" value="InterPro"/>
</dbReference>
<dbReference type="GO" id="GO:0006366">
    <property type="term" value="P:transcription by RNA polymerase II"/>
    <property type="evidence" value="ECO:0000250"/>
    <property type="project" value="UniProtKB"/>
</dbReference>
<dbReference type="GO" id="GO:0006362">
    <property type="term" value="P:transcription elongation by RNA polymerase I"/>
    <property type="evidence" value="ECO:0000318"/>
    <property type="project" value="GO_Central"/>
</dbReference>
<dbReference type="GO" id="GO:0042797">
    <property type="term" value="P:tRNA transcription by RNA polymerase III"/>
    <property type="evidence" value="ECO:0000318"/>
    <property type="project" value="GO_Central"/>
</dbReference>
<dbReference type="FunFam" id="3.40.1340.10:FF:000001">
    <property type="entry name" value="DNA-directed RNA polymerases I, II, and III subunit RPABC1"/>
    <property type="match status" value="1"/>
</dbReference>
<dbReference type="FunFam" id="3.90.940.20:FF:000001">
    <property type="entry name" value="DNA-directed RNA polymerases I, II, and III subunit RPABC1"/>
    <property type="match status" value="1"/>
</dbReference>
<dbReference type="Gene3D" id="3.40.1340.10">
    <property type="entry name" value="RNA polymerase, Rpb5, N-terminal domain"/>
    <property type="match status" value="1"/>
</dbReference>
<dbReference type="Gene3D" id="3.90.940.20">
    <property type="entry name" value="RPB5-like RNA polymerase subunit"/>
    <property type="match status" value="1"/>
</dbReference>
<dbReference type="HAMAP" id="MF_00025">
    <property type="entry name" value="RNApol_Rpo5_RPB5"/>
    <property type="match status" value="1"/>
</dbReference>
<dbReference type="InterPro" id="IPR014381">
    <property type="entry name" value="Arch_Rpo5/euc_Rpb5"/>
</dbReference>
<dbReference type="InterPro" id="IPR005571">
    <property type="entry name" value="RNA_pol_Rpb5_N"/>
</dbReference>
<dbReference type="InterPro" id="IPR036710">
    <property type="entry name" value="RNA_pol_Rpb5_N_sf"/>
</dbReference>
<dbReference type="InterPro" id="IPR000783">
    <property type="entry name" value="RNA_pol_subH/Rpb5_C"/>
</dbReference>
<dbReference type="InterPro" id="IPR020608">
    <property type="entry name" value="RNA_pol_subH/Rpb5_CS"/>
</dbReference>
<dbReference type="InterPro" id="IPR035913">
    <property type="entry name" value="RPB5-like_sf"/>
</dbReference>
<dbReference type="NCBIfam" id="NF007129">
    <property type="entry name" value="PRK09570.1"/>
    <property type="match status" value="1"/>
</dbReference>
<dbReference type="PANTHER" id="PTHR10535">
    <property type="entry name" value="DNA-DIRECTED RNA POLYMERASES I, II, AND III SUBUNIT RPABC1"/>
    <property type="match status" value="1"/>
</dbReference>
<dbReference type="PANTHER" id="PTHR10535:SF0">
    <property type="entry name" value="DNA-DIRECTED RNA POLYMERASES I, II, AND III SUBUNIT RPABC1"/>
    <property type="match status" value="1"/>
</dbReference>
<dbReference type="Pfam" id="PF01191">
    <property type="entry name" value="RNA_pol_Rpb5_C"/>
    <property type="match status" value="1"/>
</dbReference>
<dbReference type="Pfam" id="PF03871">
    <property type="entry name" value="RNA_pol_Rpb5_N"/>
    <property type="match status" value="1"/>
</dbReference>
<dbReference type="PIRSF" id="PIRSF000747">
    <property type="entry name" value="RPB5"/>
    <property type="match status" value="1"/>
</dbReference>
<dbReference type="SUPFAM" id="SSF53036">
    <property type="entry name" value="Eukaryotic RPB5 N-terminal domain"/>
    <property type="match status" value="1"/>
</dbReference>
<dbReference type="SUPFAM" id="SSF55287">
    <property type="entry name" value="RPB5-like RNA polymerase subunit"/>
    <property type="match status" value="1"/>
</dbReference>
<dbReference type="PROSITE" id="PS01110">
    <property type="entry name" value="RNA_POL_H_23KD"/>
    <property type="match status" value="1"/>
</dbReference>
<sequence length="210" mass="24570">MDDEEETYRLWKIRKTIMQLCHDRGYLVTQDELDQTLEEFKAQFGDKPSEGRPRRTDLTVLVAHNDDPTDQMFVFFPEEPKVGIKTIKVYCQRMQEENITRALIVVQQGMTPSAKQSLVDMAPKYVLEQFLQQELLINITEHELVPEHVVMTKEEVTELLARYKLRESQLPRIQAGDPVARYFGIKRGQVVKIIRPSETAGRYITYRLVQ</sequence>
<protein>
    <recommendedName>
        <fullName>DNA-directed RNA polymerases I, II, and III subunit RPABC1</fullName>
        <shortName>RNA polymerases I, II, and III subunit ABC1</shortName>
    </recommendedName>
    <alternativeName>
        <fullName>DNA-directed RNA polymerase II subunit E</fullName>
    </alternativeName>
    <alternativeName>
        <fullName>RPB5 homolog</fullName>
    </alternativeName>
</protein>
<reference key="1">
    <citation type="journal article" date="2004" name="Genome Res.">
        <title>The status, quality, and expansion of the NIH full-length cDNA project: the Mammalian Gene Collection (MGC).</title>
        <authorList>
            <consortium name="The MGC Project Team"/>
        </authorList>
    </citation>
    <scope>NUCLEOTIDE SEQUENCE [LARGE SCALE MRNA]</scope>
    <source>
        <tissue>Ovary</tissue>
    </source>
</reference>
<organism>
    <name type="scientific">Rattus norvegicus</name>
    <name type="common">Rat</name>
    <dbReference type="NCBI Taxonomy" id="10116"/>
    <lineage>
        <taxon>Eukaryota</taxon>
        <taxon>Metazoa</taxon>
        <taxon>Chordata</taxon>
        <taxon>Craniata</taxon>
        <taxon>Vertebrata</taxon>
        <taxon>Euteleostomi</taxon>
        <taxon>Mammalia</taxon>
        <taxon>Eutheria</taxon>
        <taxon>Euarchontoglires</taxon>
        <taxon>Glires</taxon>
        <taxon>Rodentia</taxon>
        <taxon>Myomorpha</taxon>
        <taxon>Muroidea</taxon>
        <taxon>Muridae</taxon>
        <taxon>Murinae</taxon>
        <taxon>Rattus</taxon>
    </lineage>
</organism>
<comment type="function">
    <text evidence="1 2 3">DNA-dependent RNA polymerase catalyzes the transcription of DNA into RNA using the four ribonucleoside triphosphates as substrates. Common component of RNA polymerases I, II and III which synthesize ribosomal RNA precursors, mRNA precursors and many functional non-coding RNAs, and small RNAs, such as 5S rRNA and tRNAs, respectively. Pol II is the central component of the basal RNA polymerase II transcription machinery. Pols are composed of mobile elements that move relative to each other. In Pol II, POLR2E/RPABC1 is part of the lower jaw surrounding the central large cleft and thought to grab the incoming DNA template. Seems to be the major component in this process (By similarity).</text>
</comment>
<comment type="subunit">
    <text evidence="2">Component of the RNA polymerase I (Pol I), RNA polymerase II (Pol II) and RNA polymerase III (Pol III) complexes consisting of at least 13, 12 and 17 subunits, respectively (By similarity). Pol I complex consists of a ten-subunit catalytic core composed of POLR1A/RPA1, POLR1B/RPA2, POLR1C/RPAC1, POLR1D/RPAC2, POLR1H/RPA12, POLR2E/RPABC1, POLR2F/RPABC2, POLR2H/RPABC3, POLR2K/RPABC4 and POLR2L/RPABC5; a mobile stalk subunit POLR1F/RPA43 protruding from the core and additional subunits homologous to general transcription factors POLR1E/RPA49 and POLR1G/RPA34. Part of Pol I pre-initiation complex (PIC), in which Pol I core assembles with RRN3 and promoter-bound UTBF and SL1/TIF-IB complex (By similarity). Pol II complex contains a ten-subunit catalytic core composed of POLR2A/RPB1, POLR2B/RPB2, POLR2C/RPB3, POLR2I/RPB9, POLR2J/RPB11, POLR2E/RPABC1, POLR2F/RPABC2, POLR2H/RPABC3, POLR2K/RPABC4 and POLR2L/RPABC5 and a mobile stalk composed of two subunits POLR2D/RPB4 and POLR2G/RPB7. Part of Pol II(G) complex, in which Pol II core associates with an additional subunit POLR2M; unlike conventional Pol II, Pol II(G) functions as a transcriptional repressor. Part of TBP-based Pol II pre-initiation complex (PIC), in which Pol II core assembles with general transcription factors and other specific initiation factors including GTF2E1, GTF2E2, GTF2F1, GTF2F2, TCEA1, ERCC2, ERCC3, GTF2H2, GTF2H3, GTF2H4, GTF2H5, GTF2A1, GTF2A2, GTF2B and TBP; this large multi-subunit PIC complex mediates DNA unwinding and targets Pol II core to the transcription start site where the first phosphodiester bond forms. In Pol II complex, this subunit is present in 2-fold molar excess over the other subunits. Pol III complex consists of a ten-subunit catalytic core composed of POLR3A/RPC1, POLR3B/RPC2, POLR1C/RPAC1, POLR1D/RPAC2, POLR3K/RPC10, POLR2E/RPABC1, POLR2F/RPABC2, POLR2H/RPABC3, POLR2K/RPABC4 and POLR2L/RPABC5; a mobile stalk composed of two subunits POLR3H/RPC8 and CRCP/RPC9, protruding from the core and functioning primarily in transcription initiation; and additional subunits homologous to general transcription factors of the RNA polymerase II machinery, POLR3C/RPC3-POLR3F/RPC6-POLR3G/RPC7 heterotrimer required for transcription initiation and POLR3D/RPC4-POLR3E/RPC5 heterodimer involved in both transcription initiation and termination. Component of the PAQosome complex which is responsible for the biogenesis of several protein complexes and which consists of R2TP complex members RUVBL1, RUVBL2, RPAP3 and PIH1D1, URI complex members PFDN2, PFDN6, PDRG1, UXT and URI1 as well as ASDURF, POLR2E and DNAAF10/WDR92. Interacts with URI1.</text>
</comment>
<comment type="subcellular location">
    <subcellularLocation>
        <location evidence="2">Nucleus</location>
    </subcellularLocation>
    <subcellularLocation>
        <location evidence="2">Nucleus</location>
        <location evidence="2">Nucleolus</location>
    </subcellularLocation>
</comment>
<comment type="similarity">
    <text evidence="4">Belongs to the archaeal Rpo5/eukaryotic RPB5 RNA polymerase subunit family.</text>
</comment>
<feature type="chain" id="PRO_0000329305" description="DNA-directed RNA polymerases I, II, and III subunit RPABC1">
    <location>
        <begin position="1"/>
        <end position="210"/>
    </location>
</feature>
<feature type="modified residue" description="N-acetylmethionine" evidence="2">
    <location>
        <position position="1"/>
    </location>
</feature>
<feature type="cross-link" description="Glycyl lysine isopeptide (Lys-Gly) (interchain with G-Cter in SUMO2)" evidence="2">
    <location>
        <position position="81"/>
    </location>
</feature>
<keyword id="KW-0007">Acetylation</keyword>
<keyword id="KW-0240">DNA-directed RNA polymerase</keyword>
<keyword id="KW-1017">Isopeptide bond</keyword>
<keyword id="KW-0539">Nucleus</keyword>
<keyword id="KW-1185">Reference proteome</keyword>
<keyword id="KW-0804">Transcription</keyword>
<keyword id="KW-0832">Ubl conjugation</keyword>
<name>RPAB1_RAT</name>
<gene>
    <name evidence="5" type="primary">Polr2e</name>
</gene>
<proteinExistence type="evidence at transcript level"/>